<keyword id="KW-0175">Coiled coil</keyword>
<keyword id="KW-0963">Cytoplasm</keyword>
<keyword id="KW-0396">Initiation factor</keyword>
<keyword id="KW-0648">Protein biosynthesis</keyword>
<keyword id="KW-1185">Reference proteome</keyword>
<keyword id="KW-0694">RNA-binding</keyword>
<gene>
    <name evidence="1" type="primary">TIF32</name>
    <name type="ordered locus">KLLA0C14498g</name>
</gene>
<dbReference type="EMBL" id="CR382123">
    <property type="protein sequence ID" value="CAH01700.1"/>
    <property type="molecule type" value="Genomic_DNA"/>
</dbReference>
<dbReference type="RefSeq" id="XP_452849.1">
    <property type="nucleotide sequence ID" value="XM_452849.1"/>
</dbReference>
<dbReference type="SMR" id="Q6CT90"/>
<dbReference type="FunCoup" id="Q6CT90">
    <property type="interactions" value="1375"/>
</dbReference>
<dbReference type="STRING" id="284590.Q6CT90"/>
<dbReference type="PaxDb" id="284590-Q6CT90"/>
<dbReference type="KEGG" id="kla:KLLA0_C14498g"/>
<dbReference type="eggNOG" id="KOG2072">
    <property type="taxonomic scope" value="Eukaryota"/>
</dbReference>
<dbReference type="HOGENOM" id="CLU_002096_2_1_1"/>
<dbReference type="InParanoid" id="Q6CT90"/>
<dbReference type="OMA" id="EHITNKR"/>
<dbReference type="Proteomes" id="UP000000598">
    <property type="component" value="Chromosome C"/>
</dbReference>
<dbReference type="GO" id="GO:0016282">
    <property type="term" value="C:eukaryotic 43S preinitiation complex"/>
    <property type="evidence" value="ECO:0007669"/>
    <property type="project" value="UniProtKB-UniRule"/>
</dbReference>
<dbReference type="GO" id="GO:0033290">
    <property type="term" value="C:eukaryotic 48S preinitiation complex"/>
    <property type="evidence" value="ECO:0007669"/>
    <property type="project" value="UniProtKB-UniRule"/>
</dbReference>
<dbReference type="GO" id="GO:0071540">
    <property type="term" value="C:eukaryotic translation initiation factor 3 complex, eIF3e"/>
    <property type="evidence" value="ECO:0007669"/>
    <property type="project" value="TreeGrafter"/>
</dbReference>
<dbReference type="GO" id="GO:0071541">
    <property type="term" value="C:eukaryotic translation initiation factor 3 complex, eIF3m"/>
    <property type="evidence" value="ECO:0007669"/>
    <property type="project" value="TreeGrafter"/>
</dbReference>
<dbReference type="GO" id="GO:0043614">
    <property type="term" value="C:multi-eIF complex"/>
    <property type="evidence" value="ECO:0007669"/>
    <property type="project" value="TreeGrafter"/>
</dbReference>
<dbReference type="GO" id="GO:0003729">
    <property type="term" value="F:mRNA binding"/>
    <property type="evidence" value="ECO:0007669"/>
    <property type="project" value="TreeGrafter"/>
</dbReference>
<dbReference type="GO" id="GO:0003743">
    <property type="term" value="F:translation initiation factor activity"/>
    <property type="evidence" value="ECO:0007669"/>
    <property type="project" value="UniProtKB-UniRule"/>
</dbReference>
<dbReference type="GO" id="GO:0001732">
    <property type="term" value="P:formation of cytoplasmic translation initiation complex"/>
    <property type="evidence" value="ECO:0007669"/>
    <property type="project" value="UniProtKB-UniRule"/>
</dbReference>
<dbReference type="GO" id="GO:0002188">
    <property type="term" value="P:translation reinitiation"/>
    <property type="evidence" value="ECO:0007669"/>
    <property type="project" value="TreeGrafter"/>
</dbReference>
<dbReference type="FunFam" id="4.10.860.10:FF:000001">
    <property type="entry name" value="Eukaryotic translation initiation factor 3 subunit A"/>
    <property type="match status" value="1"/>
</dbReference>
<dbReference type="Gene3D" id="1.25.40.860">
    <property type="match status" value="2"/>
</dbReference>
<dbReference type="Gene3D" id="4.10.860.10">
    <property type="entry name" value="UVR domain"/>
    <property type="match status" value="1"/>
</dbReference>
<dbReference type="HAMAP" id="MF_03000">
    <property type="entry name" value="eIF3a"/>
    <property type="match status" value="1"/>
</dbReference>
<dbReference type="InterPro" id="IPR027512">
    <property type="entry name" value="EIF3A"/>
</dbReference>
<dbReference type="InterPro" id="IPR054711">
    <property type="entry name" value="eIF3a_PCI_TPR-like"/>
</dbReference>
<dbReference type="InterPro" id="IPR000717">
    <property type="entry name" value="PCI_dom"/>
</dbReference>
<dbReference type="PANTHER" id="PTHR14005:SF0">
    <property type="entry name" value="EUKARYOTIC TRANSLATION INITIATION FACTOR 3 SUBUNIT A"/>
    <property type="match status" value="1"/>
</dbReference>
<dbReference type="PANTHER" id="PTHR14005">
    <property type="entry name" value="EUKARYOTIC TRANSLATION INITIATION FACTOR 3, THETA SUBUNIT"/>
    <property type="match status" value="1"/>
</dbReference>
<dbReference type="Pfam" id="PF22591">
    <property type="entry name" value="eIF3a_PCI_TPR-like"/>
    <property type="match status" value="1"/>
</dbReference>
<dbReference type="Pfam" id="PF01399">
    <property type="entry name" value="PCI"/>
    <property type="match status" value="1"/>
</dbReference>
<dbReference type="SMART" id="SM00088">
    <property type="entry name" value="PINT"/>
    <property type="match status" value="1"/>
</dbReference>
<dbReference type="PROSITE" id="PS50250">
    <property type="entry name" value="PCI"/>
    <property type="match status" value="1"/>
</dbReference>
<sequence length="925" mass="107109">MAPPALRPENAIRRADELVSVGEPMAALQSLFDLLSSRRSRFADAATLEPIIFKFLELGVELRKGKMIKEGLYQYKKHMQHTPEGLISVGAVARKFIDLIETKMTNIQAQTDAKEESNKDQAEEDLEGGVTPENLLVSVYEQEQTVGGFNNDDVSAWLRFTWESYRTTLDFLRNNSQLEITYAGVVNRTMQFCYKYNRKNEFKRLAEMLRQHLDAANYQQQRYGHHTVDLSDPDTLQRYSDQRFQQVNVSVKLELWHEAFRSIEDVHHLMRLSKRAPKPSVLANYYENLAKIFFVSGNYLLHAAAWEKFYNLYLKNPNASEEDFKFYSSQFVLSALAIQLDDLPIAGFDPQIRLCDLLDLESKPKRKDLITAAGEQQVVEKADADILKFFNILETNFDVKSAKSQLSALLPNLVEKPYFAQYVAPLRNLFIRRSIIEVSKAQTSIHLVELHEMLSLPAPFELSVFELEKYLIQAAMDDYVSISIDHETDTVSFAQDPFDAWQASLVEVPESSTSDEAKNSESEEETSQETHADEEQNEQVFTRNSEVRSKLTDLSKILKANEEYENGSYYYRVKLVREELIRRKEEVIKLEKEAAEIRAKSNAERKKRSEEENKILAKKALEERQRRMAEEKAAVESSMEKEAERRAEEMMEREREAIHEQEMKKLIAETNANGVIHIDPKEAKNLTSDKINQMVIEQVAKNKKDLTERMTYAFKKLDHLERAYRQMELPLLEKDAEEQKKRDRENYDNFKKKLIETSKADYEKKLALHQRLNKIYSTFNQYKSSVIAEKKEELEKQRALKEAQLEEAKKQRIEQVRKERYEAKVAEIQAAIEAEAAEKEALAKEEELAKRRAERERINKERDEIARKQREIEELLEKKNGSSRSSPVPSTPTPAPAPAQTAPVSNKPMSMAEKLRLKRMNAGRG</sequence>
<organism>
    <name type="scientific">Kluyveromyces lactis (strain ATCC 8585 / CBS 2359 / DSM 70799 / NBRC 1267 / NRRL Y-1140 / WM37)</name>
    <name type="common">Yeast</name>
    <name type="synonym">Candida sphaerica</name>
    <dbReference type="NCBI Taxonomy" id="284590"/>
    <lineage>
        <taxon>Eukaryota</taxon>
        <taxon>Fungi</taxon>
        <taxon>Dikarya</taxon>
        <taxon>Ascomycota</taxon>
        <taxon>Saccharomycotina</taxon>
        <taxon>Saccharomycetes</taxon>
        <taxon>Saccharomycetales</taxon>
        <taxon>Saccharomycetaceae</taxon>
        <taxon>Kluyveromyces</taxon>
    </lineage>
</organism>
<accession>Q6CT90</accession>
<name>EIF3A_KLULA</name>
<evidence type="ECO:0000255" key="1">
    <source>
        <dbReference type="HAMAP-Rule" id="MF_03000"/>
    </source>
</evidence>
<evidence type="ECO:0000255" key="2">
    <source>
        <dbReference type="PROSITE-ProRule" id="PRU01185"/>
    </source>
</evidence>
<evidence type="ECO:0000256" key="3">
    <source>
        <dbReference type="SAM" id="MobiDB-lite"/>
    </source>
</evidence>
<proteinExistence type="inferred from homology"/>
<comment type="function">
    <text evidence="1">RNA-binding component of the eukaryotic translation initiation factor 3 (eIF-3) complex, which is involved in protein synthesis of a specialized repertoire of mRNAs and, together with other initiation factors, stimulates binding of mRNA and methionyl-tRNAi to the 40S ribosome. The eIF-3 complex specifically targets and initiates translation of a subset of mRNAs involved in cell proliferation.</text>
</comment>
<comment type="subunit">
    <text evidence="1">Component of the eukaryotic translation initiation factor 3 (eIF-3) complex.</text>
</comment>
<comment type="subcellular location">
    <subcellularLocation>
        <location evidence="1">Cytoplasm</location>
    </subcellularLocation>
</comment>
<comment type="similarity">
    <text evidence="1">Belongs to the eIF-3 subunit A family.</text>
</comment>
<protein>
    <recommendedName>
        <fullName evidence="1">Eukaryotic translation initiation factor 3 subunit A</fullName>
        <shortName evidence="1">eIF3a</shortName>
    </recommendedName>
    <alternativeName>
        <fullName evidence="1">Eukaryotic translation initiation factor 3 110 kDa subunit homolog</fullName>
        <shortName evidence="1">eIF3 p110</shortName>
    </alternativeName>
    <alternativeName>
        <fullName evidence="1">Translation initiation factor eIF3, p110 subunit homolog</fullName>
    </alternativeName>
</protein>
<reference key="1">
    <citation type="journal article" date="2004" name="Nature">
        <title>Genome evolution in yeasts.</title>
        <authorList>
            <person name="Dujon B."/>
            <person name="Sherman D."/>
            <person name="Fischer G."/>
            <person name="Durrens P."/>
            <person name="Casaregola S."/>
            <person name="Lafontaine I."/>
            <person name="de Montigny J."/>
            <person name="Marck C."/>
            <person name="Neuveglise C."/>
            <person name="Talla E."/>
            <person name="Goffard N."/>
            <person name="Frangeul L."/>
            <person name="Aigle M."/>
            <person name="Anthouard V."/>
            <person name="Babour A."/>
            <person name="Barbe V."/>
            <person name="Barnay S."/>
            <person name="Blanchin S."/>
            <person name="Beckerich J.-M."/>
            <person name="Beyne E."/>
            <person name="Bleykasten C."/>
            <person name="Boisrame A."/>
            <person name="Boyer J."/>
            <person name="Cattolico L."/>
            <person name="Confanioleri F."/>
            <person name="de Daruvar A."/>
            <person name="Despons L."/>
            <person name="Fabre E."/>
            <person name="Fairhead C."/>
            <person name="Ferry-Dumazet H."/>
            <person name="Groppi A."/>
            <person name="Hantraye F."/>
            <person name="Hennequin C."/>
            <person name="Jauniaux N."/>
            <person name="Joyet P."/>
            <person name="Kachouri R."/>
            <person name="Kerrest A."/>
            <person name="Koszul R."/>
            <person name="Lemaire M."/>
            <person name="Lesur I."/>
            <person name="Ma L."/>
            <person name="Muller H."/>
            <person name="Nicaud J.-M."/>
            <person name="Nikolski M."/>
            <person name="Oztas S."/>
            <person name="Ozier-Kalogeropoulos O."/>
            <person name="Pellenz S."/>
            <person name="Potier S."/>
            <person name="Richard G.-F."/>
            <person name="Straub M.-L."/>
            <person name="Suleau A."/>
            <person name="Swennen D."/>
            <person name="Tekaia F."/>
            <person name="Wesolowski-Louvel M."/>
            <person name="Westhof E."/>
            <person name="Wirth B."/>
            <person name="Zeniou-Meyer M."/>
            <person name="Zivanovic Y."/>
            <person name="Bolotin-Fukuhara M."/>
            <person name="Thierry A."/>
            <person name="Bouchier C."/>
            <person name="Caudron B."/>
            <person name="Scarpelli C."/>
            <person name="Gaillardin C."/>
            <person name="Weissenbach J."/>
            <person name="Wincker P."/>
            <person name="Souciet J.-L."/>
        </authorList>
    </citation>
    <scope>NUCLEOTIDE SEQUENCE [LARGE SCALE GENOMIC DNA]</scope>
    <source>
        <strain>ATCC 8585 / CBS 2359 / DSM 70799 / NBRC 1267 / NRRL Y-1140 / WM37</strain>
    </source>
</reference>
<feature type="chain" id="PRO_0000366363" description="Eukaryotic translation initiation factor 3 subunit A">
    <location>
        <begin position="1"/>
        <end position="925"/>
    </location>
</feature>
<feature type="domain" description="PCI" evidence="2">
    <location>
        <begin position="324"/>
        <end position="498"/>
    </location>
</feature>
<feature type="region of interest" description="Disordered" evidence="3">
    <location>
        <begin position="108"/>
        <end position="127"/>
    </location>
</feature>
<feature type="region of interest" description="Disordered" evidence="3">
    <location>
        <begin position="509"/>
        <end position="544"/>
    </location>
</feature>
<feature type="region of interest" description="Disordered" evidence="3">
    <location>
        <begin position="839"/>
        <end position="925"/>
    </location>
</feature>
<feature type="coiled-coil region" evidence="1">
    <location>
        <begin position="534"/>
        <end position="666"/>
    </location>
</feature>
<feature type="coiled-coil region" evidence="1">
    <location>
        <begin position="785"/>
        <end position="885"/>
    </location>
</feature>
<feature type="compositionally biased region" description="Basic and acidic residues" evidence="3">
    <location>
        <begin position="112"/>
        <end position="121"/>
    </location>
</feature>
<feature type="compositionally biased region" description="Basic and acidic residues" evidence="3">
    <location>
        <begin position="839"/>
        <end position="880"/>
    </location>
</feature>
<feature type="compositionally biased region" description="Basic residues" evidence="3">
    <location>
        <begin position="916"/>
        <end position="925"/>
    </location>
</feature>